<protein>
    <recommendedName>
        <fullName evidence="1">4-hydroxy-3-methylbut-2-en-1-yl diphosphate synthase (flavodoxin)</fullName>
        <ecNumber evidence="1">1.17.7.3</ecNumber>
    </recommendedName>
    <alternativeName>
        <fullName evidence="1">1-hydroxy-2-methyl-2-(E)-butenyl 4-diphosphate synthase</fullName>
    </alternativeName>
</protein>
<sequence>MNKLENTIDSDIAGPAPRHRTTQVKVGDVAVGGGAPIVVQSMTNTDTADIDGTIAQVAALARAGSEMVRITVDREEAAAAVPHIRDGLAKRGITTPLIGDFHYIGHKLLAAYPACAEALAKYRINPGNVGFKDKRDTQFADIIEIANKNSKPVRIGANWGSLDQELLTKLMDENAASANPRDVRAVTREAMVQSALLSAARAEELGMPKDRIILSAKVSAVQDLIAVYQDLASRSDYAIHLGLTEAGMGSKGIVASSAALGILLQQGIGDTIRISLTPEPGGDRTREVQVGQELLQTMGFRTFVPLVAACPGCGRTTSTTFQELARSIQDFIRDEMPAWKTKYPGVEELNVAVMGCIVNGPGESKHANIGISLPGTGEAPAAPVFVDGKKFRTLRGPTISDDFKALVIDYIDQRYGQGAKVPVTAAE</sequence>
<accession>Q89VV9</accession>
<gene>
    <name evidence="1" type="primary">ispG</name>
    <name type="synonym">gcpE</name>
    <name type="ordered locus">blr0936</name>
</gene>
<name>ISPG_BRADU</name>
<proteinExistence type="inferred from homology"/>
<evidence type="ECO:0000255" key="1">
    <source>
        <dbReference type="HAMAP-Rule" id="MF_00159"/>
    </source>
</evidence>
<evidence type="ECO:0000256" key="2">
    <source>
        <dbReference type="SAM" id="MobiDB-lite"/>
    </source>
</evidence>
<comment type="function">
    <text evidence="1">Converts 2C-methyl-D-erythritol 2,4-cyclodiphosphate (ME-2,4cPP) into 1-hydroxy-2-methyl-2-(E)-butenyl 4-diphosphate.</text>
</comment>
<comment type="catalytic activity">
    <reaction evidence="1">
        <text>(2E)-4-hydroxy-3-methylbut-2-enyl diphosphate + oxidized [flavodoxin] + H2O + 2 H(+) = 2-C-methyl-D-erythritol 2,4-cyclic diphosphate + reduced [flavodoxin]</text>
        <dbReference type="Rhea" id="RHEA:43604"/>
        <dbReference type="Rhea" id="RHEA-COMP:10622"/>
        <dbReference type="Rhea" id="RHEA-COMP:10623"/>
        <dbReference type="ChEBI" id="CHEBI:15377"/>
        <dbReference type="ChEBI" id="CHEBI:15378"/>
        <dbReference type="ChEBI" id="CHEBI:57618"/>
        <dbReference type="ChEBI" id="CHEBI:58210"/>
        <dbReference type="ChEBI" id="CHEBI:58483"/>
        <dbReference type="ChEBI" id="CHEBI:128753"/>
        <dbReference type="EC" id="1.17.7.3"/>
    </reaction>
</comment>
<comment type="cofactor">
    <cofactor evidence="1">
        <name>[4Fe-4S] cluster</name>
        <dbReference type="ChEBI" id="CHEBI:49883"/>
    </cofactor>
    <text evidence="1">Binds 1 [4Fe-4S] cluster.</text>
</comment>
<comment type="pathway">
    <text evidence="1">Isoprenoid biosynthesis; isopentenyl diphosphate biosynthesis via DXP pathway; isopentenyl diphosphate from 1-deoxy-D-xylulose 5-phosphate: step 5/6.</text>
</comment>
<comment type="similarity">
    <text evidence="1">Belongs to the IspG family.</text>
</comment>
<feature type="chain" id="PRO_0000190545" description="4-hydroxy-3-methylbut-2-en-1-yl diphosphate synthase (flavodoxin)">
    <location>
        <begin position="1"/>
        <end position="427"/>
    </location>
</feature>
<feature type="region of interest" description="Disordered" evidence="2">
    <location>
        <begin position="1"/>
        <end position="21"/>
    </location>
</feature>
<feature type="binding site" evidence="1">
    <location>
        <position position="310"/>
    </location>
    <ligand>
        <name>[4Fe-4S] cluster</name>
        <dbReference type="ChEBI" id="CHEBI:49883"/>
    </ligand>
</feature>
<feature type="binding site" evidence="1">
    <location>
        <position position="313"/>
    </location>
    <ligand>
        <name>[4Fe-4S] cluster</name>
        <dbReference type="ChEBI" id="CHEBI:49883"/>
    </ligand>
</feature>
<feature type="binding site" evidence="1">
    <location>
        <position position="356"/>
    </location>
    <ligand>
        <name>[4Fe-4S] cluster</name>
        <dbReference type="ChEBI" id="CHEBI:49883"/>
    </ligand>
</feature>
<feature type="binding site" evidence="1">
    <location>
        <position position="363"/>
    </location>
    <ligand>
        <name>[4Fe-4S] cluster</name>
        <dbReference type="ChEBI" id="CHEBI:49883"/>
    </ligand>
</feature>
<dbReference type="EC" id="1.17.7.3" evidence="1"/>
<dbReference type="EMBL" id="BA000040">
    <property type="protein sequence ID" value="BAC46201.1"/>
    <property type="molecule type" value="Genomic_DNA"/>
</dbReference>
<dbReference type="RefSeq" id="NP_767576.1">
    <property type="nucleotide sequence ID" value="NC_004463.1"/>
</dbReference>
<dbReference type="RefSeq" id="WP_011083758.1">
    <property type="nucleotide sequence ID" value="NC_004463.1"/>
</dbReference>
<dbReference type="SMR" id="Q89VV9"/>
<dbReference type="FunCoup" id="Q89VV9">
    <property type="interactions" value="392"/>
</dbReference>
<dbReference type="STRING" id="224911.AAV28_01520"/>
<dbReference type="EnsemblBacteria" id="BAC46201">
    <property type="protein sequence ID" value="BAC46201"/>
    <property type="gene ID" value="BAC46201"/>
</dbReference>
<dbReference type="GeneID" id="46488205"/>
<dbReference type="KEGG" id="bja:blr0936"/>
<dbReference type="PATRIC" id="fig|224911.44.peg.324"/>
<dbReference type="eggNOG" id="COG0821">
    <property type="taxonomic scope" value="Bacteria"/>
</dbReference>
<dbReference type="HOGENOM" id="CLU_042258_1_0_5"/>
<dbReference type="InParanoid" id="Q89VV9"/>
<dbReference type="OrthoDB" id="9803214at2"/>
<dbReference type="PhylomeDB" id="Q89VV9"/>
<dbReference type="UniPathway" id="UPA00056">
    <property type="reaction ID" value="UER00096"/>
</dbReference>
<dbReference type="Proteomes" id="UP000002526">
    <property type="component" value="Chromosome"/>
</dbReference>
<dbReference type="GO" id="GO:0051539">
    <property type="term" value="F:4 iron, 4 sulfur cluster binding"/>
    <property type="evidence" value="ECO:0007669"/>
    <property type="project" value="UniProtKB-UniRule"/>
</dbReference>
<dbReference type="GO" id="GO:0046429">
    <property type="term" value="F:4-hydroxy-3-methylbut-2-en-1-yl diphosphate synthase activity (ferredoxin)"/>
    <property type="evidence" value="ECO:0000318"/>
    <property type="project" value="GO_Central"/>
</dbReference>
<dbReference type="GO" id="GO:0141197">
    <property type="term" value="F:4-hydroxy-3-methylbut-2-enyl-diphosphate synthase activity (flavodoxin)"/>
    <property type="evidence" value="ECO:0007669"/>
    <property type="project" value="UniProtKB-EC"/>
</dbReference>
<dbReference type="GO" id="GO:0005506">
    <property type="term" value="F:iron ion binding"/>
    <property type="evidence" value="ECO:0007669"/>
    <property type="project" value="InterPro"/>
</dbReference>
<dbReference type="GO" id="GO:0019288">
    <property type="term" value="P:isopentenyl diphosphate biosynthetic process, methylerythritol 4-phosphate pathway"/>
    <property type="evidence" value="ECO:0000318"/>
    <property type="project" value="GO_Central"/>
</dbReference>
<dbReference type="GO" id="GO:0016114">
    <property type="term" value="P:terpenoid biosynthetic process"/>
    <property type="evidence" value="ECO:0007669"/>
    <property type="project" value="InterPro"/>
</dbReference>
<dbReference type="FunFam" id="3.20.20.20:FF:000001">
    <property type="entry name" value="4-hydroxy-3-methylbut-2-en-1-yl diphosphate synthase (flavodoxin)"/>
    <property type="match status" value="1"/>
</dbReference>
<dbReference type="FunFam" id="3.30.413.10:FF:000012">
    <property type="entry name" value="4-hydroxy-3-methylbut-2-en-1-yl diphosphate synthase (flavodoxin)"/>
    <property type="match status" value="1"/>
</dbReference>
<dbReference type="Gene3D" id="3.20.20.20">
    <property type="entry name" value="Dihydropteroate synthase-like"/>
    <property type="match status" value="1"/>
</dbReference>
<dbReference type="Gene3D" id="3.30.413.10">
    <property type="entry name" value="Sulfite Reductase Hemoprotein, domain 1"/>
    <property type="match status" value="1"/>
</dbReference>
<dbReference type="HAMAP" id="MF_00159">
    <property type="entry name" value="IspG"/>
    <property type="match status" value="1"/>
</dbReference>
<dbReference type="InterPro" id="IPR011005">
    <property type="entry name" value="Dihydropteroate_synth-like_sf"/>
</dbReference>
<dbReference type="InterPro" id="IPR016425">
    <property type="entry name" value="IspG_bac"/>
</dbReference>
<dbReference type="InterPro" id="IPR004588">
    <property type="entry name" value="IspG_bac-typ"/>
</dbReference>
<dbReference type="InterPro" id="IPR045854">
    <property type="entry name" value="NO2/SO3_Rdtase_4Fe4S_sf"/>
</dbReference>
<dbReference type="NCBIfam" id="TIGR00612">
    <property type="entry name" value="ispG_gcpE"/>
    <property type="match status" value="1"/>
</dbReference>
<dbReference type="NCBIfam" id="NF001540">
    <property type="entry name" value="PRK00366.1"/>
    <property type="match status" value="1"/>
</dbReference>
<dbReference type="PANTHER" id="PTHR30454">
    <property type="entry name" value="4-HYDROXY-3-METHYLBUT-2-EN-1-YL DIPHOSPHATE SYNTHASE"/>
    <property type="match status" value="1"/>
</dbReference>
<dbReference type="PANTHER" id="PTHR30454:SF0">
    <property type="entry name" value="4-HYDROXY-3-METHYLBUT-2-EN-1-YL DIPHOSPHATE SYNTHASE (FERREDOXIN), CHLOROPLASTIC"/>
    <property type="match status" value="1"/>
</dbReference>
<dbReference type="Pfam" id="PF04551">
    <property type="entry name" value="GcpE"/>
    <property type="match status" value="1"/>
</dbReference>
<dbReference type="PIRSF" id="PIRSF004640">
    <property type="entry name" value="IspG"/>
    <property type="match status" value="1"/>
</dbReference>
<keyword id="KW-0004">4Fe-4S</keyword>
<keyword id="KW-0408">Iron</keyword>
<keyword id="KW-0411">Iron-sulfur</keyword>
<keyword id="KW-0414">Isoprene biosynthesis</keyword>
<keyword id="KW-0479">Metal-binding</keyword>
<keyword id="KW-0560">Oxidoreductase</keyword>
<keyword id="KW-1185">Reference proteome</keyword>
<reference key="1">
    <citation type="journal article" date="2002" name="DNA Res.">
        <title>Complete genomic sequence of nitrogen-fixing symbiotic bacterium Bradyrhizobium japonicum USDA110.</title>
        <authorList>
            <person name="Kaneko T."/>
            <person name="Nakamura Y."/>
            <person name="Sato S."/>
            <person name="Minamisawa K."/>
            <person name="Uchiumi T."/>
            <person name="Sasamoto S."/>
            <person name="Watanabe A."/>
            <person name="Idesawa K."/>
            <person name="Iriguchi M."/>
            <person name="Kawashima K."/>
            <person name="Kohara M."/>
            <person name="Matsumoto M."/>
            <person name="Shimpo S."/>
            <person name="Tsuruoka H."/>
            <person name="Wada T."/>
            <person name="Yamada M."/>
            <person name="Tabata S."/>
        </authorList>
    </citation>
    <scope>NUCLEOTIDE SEQUENCE [LARGE SCALE GENOMIC DNA]</scope>
    <source>
        <strain>JCM 10833 / BCRC 13528 / IAM 13628 / NBRC 14792 / USDA 110</strain>
    </source>
</reference>
<organism>
    <name type="scientific">Bradyrhizobium diazoefficiens (strain JCM 10833 / BCRC 13528 / IAM 13628 / NBRC 14792 / USDA 110)</name>
    <dbReference type="NCBI Taxonomy" id="224911"/>
    <lineage>
        <taxon>Bacteria</taxon>
        <taxon>Pseudomonadati</taxon>
        <taxon>Pseudomonadota</taxon>
        <taxon>Alphaproteobacteria</taxon>
        <taxon>Hyphomicrobiales</taxon>
        <taxon>Nitrobacteraceae</taxon>
        <taxon>Bradyrhizobium</taxon>
    </lineage>
</organism>